<accession>A8G2K3</accession>
<organism>
    <name type="scientific">Prochlorococcus marinus (strain MIT 9215)</name>
    <dbReference type="NCBI Taxonomy" id="93060"/>
    <lineage>
        <taxon>Bacteria</taxon>
        <taxon>Bacillati</taxon>
        <taxon>Cyanobacteriota</taxon>
        <taxon>Cyanophyceae</taxon>
        <taxon>Synechococcales</taxon>
        <taxon>Prochlorococcaceae</taxon>
        <taxon>Prochlorococcus</taxon>
    </lineage>
</organism>
<keyword id="KW-0131">Cell cycle</keyword>
<keyword id="KW-0132">Cell division</keyword>
<keyword id="KW-0997">Cell inner membrane</keyword>
<keyword id="KW-1003">Cell membrane</keyword>
<keyword id="KW-0133">Cell shape</keyword>
<keyword id="KW-0961">Cell wall biogenesis/degradation</keyword>
<keyword id="KW-0328">Glycosyltransferase</keyword>
<keyword id="KW-0472">Membrane</keyword>
<keyword id="KW-0573">Peptidoglycan synthesis</keyword>
<keyword id="KW-0808">Transferase</keyword>
<evidence type="ECO:0000255" key="1">
    <source>
        <dbReference type="HAMAP-Rule" id="MF_00033"/>
    </source>
</evidence>
<protein>
    <recommendedName>
        <fullName evidence="1">UDP-N-acetylglucosamine--N-acetylmuramyl-(pentapeptide) pyrophosphoryl-undecaprenol N-acetylglucosamine transferase</fullName>
        <ecNumber evidence="1">2.4.1.227</ecNumber>
    </recommendedName>
    <alternativeName>
        <fullName evidence="1">Undecaprenyl-PP-MurNAc-pentapeptide-UDPGlcNAc GlcNAc transferase</fullName>
    </alternativeName>
</protein>
<dbReference type="EC" id="2.4.1.227" evidence="1"/>
<dbReference type="EMBL" id="CP000825">
    <property type="protein sequence ID" value="ABV49834.1"/>
    <property type="molecule type" value="Genomic_DNA"/>
</dbReference>
<dbReference type="RefSeq" id="WP_012007004.1">
    <property type="nucleotide sequence ID" value="NC_009840.1"/>
</dbReference>
<dbReference type="SMR" id="A8G2K3"/>
<dbReference type="STRING" id="93060.P9215_02151"/>
<dbReference type="CAZy" id="GT28">
    <property type="family name" value="Glycosyltransferase Family 28"/>
</dbReference>
<dbReference type="KEGG" id="pmh:P9215_02151"/>
<dbReference type="eggNOG" id="COG0707">
    <property type="taxonomic scope" value="Bacteria"/>
</dbReference>
<dbReference type="HOGENOM" id="CLU_037404_0_0_3"/>
<dbReference type="OrthoDB" id="9808936at2"/>
<dbReference type="UniPathway" id="UPA00219"/>
<dbReference type="Proteomes" id="UP000002014">
    <property type="component" value="Chromosome"/>
</dbReference>
<dbReference type="GO" id="GO:0005886">
    <property type="term" value="C:plasma membrane"/>
    <property type="evidence" value="ECO:0007669"/>
    <property type="project" value="UniProtKB-SubCell"/>
</dbReference>
<dbReference type="GO" id="GO:0051991">
    <property type="term" value="F:UDP-N-acetyl-D-glucosamine:N-acetylmuramoyl-L-alanyl-D-glutamyl-meso-2,6-diaminopimelyl-D-alanyl-D-alanine-diphosphoundecaprenol 4-beta-N-acetylglucosaminlytransferase activity"/>
    <property type="evidence" value="ECO:0007669"/>
    <property type="project" value="RHEA"/>
</dbReference>
<dbReference type="GO" id="GO:0050511">
    <property type="term" value="F:undecaprenyldiphospho-muramoylpentapeptide beta-N-acetylglucosaminyltransferase activity"/>
    <property type="evidence" value="ECO:0007669"/>
    <property type="project" value="UniProtKB-UniRule"/>
</dbReference>
<dbReference type="GO" id="GO:0005975">
    <property type="term" value="P:carbohydrate metabolic process"/>
    <property type="evidence" value="ECO:0007669"/>
    <property type="project" value="InterPro"/>
</dbReference>
<dbReference type="GO" id="GO:0051301">
    <property type="term" value="P:cell division"/>
    <property type="evidence" value="ECO:0007669"/>
    <property type="project" value="UniProtKB-KW"/>
</dbReference>
<dbReference type="GO" id="GO:0071555">
    <property type="term" value="P:cell wall organization"/>
    <property type="evidence" value="ECO:0007669"/>
    <property type="project" value="UniProtKB-KW"/>
</dbReference>
<dbReference type="GO" id="GO:0030259">
    <property type="term" value="P:lipid glycosylation"/>
    <property type="evidence" value="ECO:0007669"/>
    <property type="project" value="UniProtKB-UniRule"/>
</dbReference>
<dbReference type="GO" id="GO:0009252">
    <property type="term" value="P:peptidoglycan biosynthetic process"/>
    <property type="evidence" value="ECO:0007669"/>
    <property type="project" value="UniProtKB-UniRule"/>
</dbReference>
<dbReference type="GO" id="GO:0008360">
    <property type="term" value="P:regulation of cell shape"/>
    <property type="evidence" value="ECO:0007669"/>
    <property type="project" value="UniProtKB-KW"/>
</dbReference>
<dbReference type="CDD" id="cd03785">
    <property type="entry name" value="GT28_MurG"/>
    <property type="match status" value="1"/>
</dbReference>
<dbReference type="Gene3D" id="3.40.50.2000">
    <property type="entry name" value="Glycogen Phosphorylase B"/>
    <property type="match status" value="2"/>
</dbReference>
<dbReference type="HAMAP" id="MF_00033">
    <property type="entry name" value="MurG"/>
    <property type="match status" value="1"/>
</dbReference>
<dbReference type="InterPro" id="IPR006009">
    <property type="entry name" value="GlcNAc_MurG"/>
</dbReference>
<dbReference type="InterPro" id="IPR007235">
    <property type="entry name" value="Glyco_trans_28_C"/>
</dbReference>
<dbReference type="InterPro" id="IPR004276">
    <property type="entry name" value="GlycoTrans_28_N"/>
</dbReference>
<dbReference type="PANTHER" id="PTHR21015:SF22">
    <property type="entry name" value="GLYCOSYLTRANSFERASE"/>
    <property type="match status" value="1"/>
</dbReference>
<dbReference type="PANTHER" id="PTHR21015">
    <property type="entry name" value="UDP-N-ACETYLGLUCOSAMINE--N-ACETYLMURAMYL-(PENTAPEPTIDE) PYROPHOSPHORYL-UNDECAPRENOL N-ACETYLGLUCOSAMINE TRANSFERASE 1"/>
    <property type="match status" value="1"/>
</dbReference>
<dbReference type="Pfam" id="PF04101">
    <property type="entry name" value="Glyco_tran_28_C"/>
    <property type="match status" value="1"/>
</dbReference>
<dbReference type="Pfam" id="PF03033">
    <property type="entry name" value="Glyco_transf_28"/>
    <property type="match status" value="1"/>
</dbReference>
<dbReference type="SUPFAM" id="SSF53756">
    <property type="entry name" value="UDP-Glycosyltransferase/glycogen phosphorylase"/>
    <property type="match status" value="1"/>
</dbReference>
<sequence length="362" mass="41424">MSKKNNLLVAASGTGGHIFPALAVSKEVEDKWNIHWLGVKQRLDSNLIPKKYNLRTLSIKTPRKNIFLFYQYIEILMSTFQIIRILKEKKINLVFTTGGYISAPTIIASKFLRIPVIIHESNLIPGMVTKYFGFLCNYVLLGFKNTNSYLRNCKTIFTGTPLREQFYKSNPLPEWVPKGKGPLLIVMGGSQGAKAINQILNESLEFLLKKQFRIVHIIGESNQQPFYIKNTKNYIQKKFTNEVAALIQNCDLVISRSGAGTINELIEAEKPSILIPYPDSKNNHQEKNAMIIAESGGSVLINQNNISKEVFEETLERIFKIKSKKGVNHYEILDLMKRNMVNNKIKSKNEIKKFINYFLKEF</sequence>
<name>MURG_PROM2</name>
<reference key="1">
    <citation type="journal article" date="2007" name="PLoS Genet.">
        <title>Patterns and implications of gene gain and loss in the evolution of Prochlorococcus.</title>
        <authorList>
            <person name="Kettler G.C."/>
            <person name="Martiny A.C."/>
            <person name="Huang K."/>
            <person name="Zucker J."/>
            <person name="Coleman M.L."/>
            <person name="Rodrigue S."/>
            <person name="Chen F."/>
            <person name="Lapidus A."/>
            <person name="Ferriera S."/>
            <person name="Johnson J."/>
            <person name="Steglich C."/>
            <person name="Church G.M."/>
            <person name="Richardson P."/>
            <person name="Chisholm S.W."/>
        </authorList>
    </citation>
    <scope>NUCLEOTIDE SEQUENCE [LARGE SCALE GENOMIC DNA]</scope>
    <source>
        <strain>MIT 9215</strain>
    </source>
</reference>
<comment type="function">
    <text evidence="1">Cell wall formation. Catalyzes the transfer of a GlcNAc subunit on undecaprenyl-pyrophosphoryl-MurNAc-pentapeptide (lipid intermediate I) to form undecaprenyl-pyrophosphoryl-MurNAc-(pentapeptide)GlcNAc (lipid intermediate II).</text>
</comment>
<comment type="catalytic activity">
    <reaction evidence="1">
        <text>di-trans,octa-cis-undecaprenyl diphospho-N-acetyl-alpha-D-muramoyl-L-alanyl-D-glutamyl-meso-2,6-diaminopimeloyl-D-alanyl-D-alanine + UDP-N-acetyl-alpha-D-glucosamine = di-trans,octa-cis-undecaprenyl diphospho-[N-acetyl-alpha-D-glucosaminyl-(1-&gt;4)]-N-acetyl-alpha-D-muramoyl-L-alanyl-D-glutamyl-meso-2,6-diaminopimeloyl-D-alanyl-D-alanine + UDP + H(+)</text>
        <dbReference type="Rhea" id="RHEA:31227"/>
        <dbReference type="ChEBI" id="CHEBI:15378"/>
        <dbReference type="ChEBI" id="CHEBI:57705"/>
        <dbReference type="ChEBI" id="CHEBI:58223"/>
        <dbReference type="ChEBI" id="CHEBI:61387"/>
        <dbReference type="ChEBI" id="CHEBI:61388"/>
        <dbReference type="EC" id="2.4.1.227"/>
    </reaction>
</comment>
<comment type="pathway">
    <text evidence="1">Cell wall biogenesis; peptidoglycan biosynthesis.</text>
</comment>
<comment type="subcellular location">
    <subcellularLocation>
        <location evidence="1">Cell inner membrane</location>
        <topology evidence="1">Peripheral membrane protein</topology>
        <orientation evidence="1">Cytoplasmic side</orientation>
    </subcellularLocation>
</comment>
<comment type="similarity">
    <text evidence="1">Belongs to the glycosyltransferase 28 family. MurG subfamily.</text>
</comment>
<feature type="chain" id="PRO_1000057250" description="UDP-N-acetylglucosamine--N-acetylmuramyl-(pentapeptide) pyrophosphoryl-undecaprenol N-acetylglucosamine transferase">
    <location>
        <begin position="1"/>
        <end position="362"/>
    </location>
</feature>
<feature type="binding site" evidence="1">
    <location>
        <begin position="14"/>
        <end position="16"/>
    </location>
    <ligand>
        <name>UDP-N-acetyl-alpha-D-glucosamine</name>
        <dbReference type="ChEBI" id="CHEBI:57705"/>
    </ligand>
</feature>
<feature type="binding site" evidence="1">
    <location>
        <position position="122"/>
    </location>
    <ligand>
        <name>UDP-N-acetyl-alpha-D-glucosamine</name>
        <dbReference type="ChEBI" id="CHEBI:57705"/>
    </ligand>
</feature>
<feature type="binding site" evidence="1">
    <location>
        <position position="163"/>
    </location>
    <ligand>
        <name>UDP-N-acetyl-alpha-D-glucosamine</name>
        <dbReference type="ChEBI" id="CHEBI:57705"/>
    </ligand>
</feature>
<feature type="binding site" evidence="1">
    <location>
        <position position="190"/>
    </location>
    <ligand>
        <name>UDP-N-acetyl-alpha-D-glucosamine</name>
        <dbReference type="ChEBI" id="CHEBI:57705"/>
    </ligand>
</feature>
<feature type="binding site" evidence="1">
    <location>
        <position position="285"/>
    </location>
    <ligand>
        <name>UDP-N-acetyl-alpha-D-glucosamine</name>
        <dbReference type="ChEBI" id="CHEBI:57705"/>
    </ligand>
</feature>
<gene>
    <name evidence="1" type="primary">murG</name>
    <name type="ordered locus">P9215_02151</name>
</gene>
<proteinExistence type="inferred from homology"/>